<keyword id="KW-0025">Alternative splicing</keyword>
<keyword id="KW-1003">Cell membrane</keyword>
<keyword id="KW-0325">Glycoprotein</keyword>
<keyword id="KW-0472">Membrane</keyword>
<keyword id="KW-0597">Phosphoprotein</keyword>
<keyword id="KW-0675">Receptor</keyword>
<keyword id="KW-1185">Reference proteome</keyword>
<keyword id="KW-0683">Retinol-binding</keyword>
<keyword id="KW-0812">Transmembrane</keyword>
<keyword id="KW-1133">Transmembrane helix</keyword>
<keyword id="KW-0813">Transport</keyword>
<keyword id="KW-0845">Vitamin A</keyword>
<accession>Q5R7B4</accession>
<accession>Q5RFR1</accession>
<name>STRA6_PONAB</name>
<sequence length="667" mass="73567">MSSQPAGNQTSPGPTEDYSYGSWYIDEPQGGEELQPEGEVPSCHTSIPPSLYHACLASLSILVLLLLAMLVRRRQLWPDCVRGRPGLPSPVDFLAGDRPQAVPAAVFVVLFSSLCLLLPDEDPLPFLTLASAPSQDGKTEAPRGAWKILGLFYYAALCYPLAACATAGHTAAHLLGSTLSWAHLGVQVWQRAECPQVPKIYKYYSLLASLPLLLGLGFLSLWYPVQLVRSFSCRTGAGSKGLQSSYSEEYLRNLLCRKKLGSSSHTSKHGFLSWAWVCLRHCIYTPQPGFRLPLKLVLSATLTGTAIYQVALLLLVGMVPNIQKVRAGVTTDVSYLLAGFGIVLSEDKQEVVELVKHHLWALEVCYISALVLSCSLTFLVLMRSLVTHRTNLRALHRGAALDSSPLHRSPHPSRRAIFCWMSFSAYQTAFICLGLLVQQIIFFLGTTALAFLVLMPVLHGRNLLLFRSLESSWPFWLTLALAVILQSMAAHWVFLETHDGHPQLTNRRVLYAATFLLFPLNVLVGAMVATWRVLLSALYNAIHLGQMDLSLLPPRAATLDPGYYTYRNFLKIEVSQSHPAMTAFCSLLLQARSLLPRTMAAPQDSLRPGEEDEGMQLLQTKDSMAKGARPRANRGRARWGLAYTLLHNPTLQVFRKTALLGANGAQP</sequence>
<organism>
    <name type="scientific">Pongo abelii</name>
    <name type="common">Sumatran orangutan</name>
    <name type="synonym">Pongo pygmaeus abelii</name>
    <dbReference type="NCBI Taxonomy" id="9601"/>
    <lineage>
        <taxon>Eukaryota</taxon>
        <taxon>Metazoa</taxon>
        <taxon>Chordata</taxon>
        <taxon>Craniata</taxon>
        <taxon>Vertebrata</taxon>
        <taxon>Euteleostomi</taxon>
        <taxon>Mammalia</taxon>
        <taxon>Eutheria</taxon>
        <taxon>Euarchontoglires</taxon>
        <taxon>Primates</taxon>
        <taxon>Haplorrhini</taxon>
        <taxon>Catarrhini</taxon>
        <taxon>Hominidae</taxon>
        <taxon>Pongo</taxon>
    </lineage>
</organism>
<feature type="chain" id="PRO_0000311230" description="Receptor for retinol uptake STRA6">
    <location>
        <begin position="1"/>
        <end position="667"/>
    </location>
</feature>
<feature type="topological domain" description="Extracellular" evidence="1">
    <location>
        <begin position="1"/>
        <end position="50"/>
    </location>
</feature>
<feature type="transmembrane region" description="Helical" evidence="1">
    <location>
        <begin position="51"/>
        <end position="71"/>
    </location>
</feature>
<feature type="topological domain" description="Cytoplasmic" evidence="1">
    <location>
        <begin position="72"/>
        <end position="98"/>
    </location>
</feature>
<feature type="transmembrane region" description="Helical" evidence="1">
    <location>
        <begin position="99"/>
        <end position="119"/>
    </location>
</feature>
<feature type="topological domain" description="Extracellular" evidence="1">
    <location>
        <begin position="120"/>
        <end position="144"/>
    </location>
</feature>
<feature type="transmembrane region" description="Helical" evidence="1">
    <location>
        <begin position="145"/>
        <end position="165"/>
    </location>
</feature>
<feature type="topological domain" description="Cytoplasmic" evidence="1">
    <location>
        <begin position="166"/>
        <end position="168"/>
    </location>
</feature>
<feature type="transmembrane region" description="Helical" evidence="1">
    <location>
        <begin position="169"/>
        <end position="189"/>
    </location>
</feature>
<feature type="topological domain" description="Extracellular" evidence="1">
    <location>
        <begin position="190"/>
        <end position="205"/>
    </location>
</feature>
<feature type="transmembrane region" description="Helical" evidence="1">
    <location>
        <begin position="206"/>
        <end position="226"/>
    </location>
</feature>
<feature type="topological domain" description="Cytoplasmic" evidence="1">
    <location>
        <begin position="227"/>
        <end position="295"/>
    </location>
</feature>
<feature type="transmembrane region" description="Helical" evidence="1">
    <location>
        <begin position="296"/>
        <end position="316"/>
    </location>
</feature>
<feature type="topological domain" description="Extracellular" evidence="1">
    <location>
        <begin position="317"/>
        <end position="367"/>
    </location>
</feature>
<feature type="transmembrane region" description="Helical" evidence="1">
    <location>
        <begin position="368"/>
        <end position="388"/>
    </location>
</feature>
<feature type="topological domain" description="Cytoplasmic" evidence="1">
    <location>
        <begin position="389"/>
        <end position="422"/>
    </location>
</feature>
<feature type="transmembrane region" description="Helical" evidence="1">
    <location>
        <begin position="423"/>
        <end position="443"/>
    </location>
</feature>
<feature type="topological domain" description="Extracellular" evidence="1">
    <location>
        <begin position="444"/>
        <end position="473"/>
    </location>
</feature>
<feature type="transmembrane region" description="Helical" evidence="1">
    <location>
        <begin position="474"/>
        <end position="494"/>
    </location>
</feature>
<feature type="topological domain" description="Cytoplasmic" evidence="1">
    <location>
        <begin position="495"/>
        <end position="509"/>
    </location>
</feature>
<feature type="intramembrane region" description="Helical" evidence="1">
    <location>
        <begin position="510"/>
        <end position="547"/>
    </location>
</feature>
<feature type="topological domain" description="Cytoplasmic" evidence="1">
    <location>
        <begin position="548"/>
        <end position="667"/>
    </location>
</feature>
<feature type="region of interest" description="Disordered" evidence="5">
    <location>
        <begin position="1"/>
        <end position="22"/>
    </location>
</feature>
<feature type="region of interest" description="Interaction with RBP1" evidence="3">
    <location>
        <begin position="235"/>
        <end position="293"/>
    </location>
</feature>
<feature type="compositionally biased region" description="Polar residues" evidence="5">
    <location>
        <begin position="1"/>
        <end position="13"/>
    </location>
</feature>
<feature type="modified residue" description="Phosphotyrosine" evidence="3">
    <location>
        <position position="643"/>
    </location>
</feature>
<feature type="glycosylation site" description="N-linked (GlcNAc...) asparagine" evidence="4">
    <location>
        <position position="8"/>
    </location>
</feature>
<feature type="splice variant" id="VSP_029440" description="In isoform 2." evidence="6">
    <location>
        <begin position="136"/>
        <end position="143"/>
    </location>
</feature>
<feature type="sequence conflict" description="In Ref. 1; CAH89396." evidence="7" ref="1">
    <original>C</original>
    <variation>R</variation>
    <location>
        <position position="233"/>
    </location>
</feature>
<feature type="sequence conflict" description="In Ref. 1; CAH89396." evidence="7" ref="1">
    <original>R</original>
    <variation>Q</variation>
    <location>
        <position position="393"/>
    </location>
</feature>
<feature type="sequence conflict" description="In Ref. 1; CAH89396." evidence="7" ref="1">
    <original>S</original>
    <variation>L</variation>
    <location>
        <position position="403"/>
    </location>
</feature>
<feature type="sequence conflict" description="In Ref. 1; CAH89396." evidence="7" ref="1">
    <original>R</original>
    <variation>H</variation>
    <location>
        <position position="415"/>
    </location>
</feature>
<feature type="sequence conflict" description="In Ref. 1; CAH89396." evidence="7" ref="1">
    <original>S</original>
    <variation>N</variation>
    <location>
        <position position="487"/>
    </location>
</feature>
<reference key="1">
    <citation type="submission" date="2004-11" db="EMBL/GenBank/DDBJ databases">
        <authorList>
            <consortium name="The German cDNA consortium"/>
        </authorList>
    </citation>
    <scope>NUCLEOTIDE SEQUENCE [LARGE SCALE MRNA] (ISOFORMS 1 AND 2)</scope>
    <source>
        <tissue>Kidney</tissue>
    </source>
</reference>
<gene>
    <name type="primary">STRA6</name>
</gene>
<comment type="function">
    <text evidence="3">Functions as a retinol transporter. Accepts all-trans retinol from the extracellular retinol-binding protein RBP4, facilitates retinol transport across the cell membrane, and then transfers retinol to the cytoplasmic retinol-binding protein RBP1. Retinol uptake is enhanced by LRAT, an enzyme that converts retinol to all-trans retinyl esters, the storage forms of vitamin A. Contributes to the activation of a signaling cascade that depends on retinol transport and LRAT-dependent generation of retinol metabolites that then trigger activation of JAK2 and its target STAT5, and ultimately increase the expression of SOCS3 and inhibit cellular responses to insulin. Important for the homeostasis of vitamin A and its derivatives, such as retinoic acid. STRA6-mediated transport is particularly important in the eye, and under conditions of dietary vitamin A deficiency. Does not transport retinoic acid.</text>
</comment>
<comment type="subunit">
    <text evidence="1 3">Homodimer (By similarity). Interacts with JAK2 and STAT5. Interacts (via extracellular domains) with RBP4. Interacts (via cytoplasmic domains) with RBP1 (By similarity).</text>
</comment>
<comment type="subcellular location">
    <subcellularLocation>
        <location evidence="2">Cell membrane</location>
        <topology evidence="2">Multi-pass membrane protein</topology>
    </subcellularLocation>
    <text evidence="2">In the retinal pigment epithelium localizes to the basolateral membrane.</text>
</comment>
<comment type="alternative products">
    <event type="alternative splicing"/>
    <isoform>
        <id>Q5R7B4-1</id>
        <name>1</name>
        <sequence type="displayed"/>
    </isoform>
    <isoform>
        <id>Q5R7B4-2</id>
        <name>2</name>
        <sequence type="described" ref="VSP_029440"/>
    </isoform>
</comment>
<comment type="domain">
    <text evidence="1 2">Contrary to predictions, contains nine transmembrane helices, with an extracellular N-terminus and a cytoplasmic C-terminus (By similarity). Besides, contains one long helix that dips into the membrane and then runs more or less parallel to the membrane surface (By similarity).</text>
</comment>
<comment type="PTM">
    <text evidence="3">Phosphorylated on tyrosine residues in response to RBP4 binding. Phosphorylation requires the presence of LRAT, suggesting it may be triggered by the uptake of retinol that is then metabolized within the cell to retinoids that function as signaling molecules.</text>
</comment>
<dbReference type="EMBL" id="CR857091">
    <property type="protein sequence ID" value="CAH89396.1"/>
    <property type="molecule type" value="mRNA"/>
</dbReference>
<dbReference type="EMBL" id="CR860204">
    <property type="protein sequence ID" value="CAH92346.1"/>
    <property type="molecule type" value="mRNA"/>
</dbReference>
<dbReference type="RefSeq" id="NP_001127142.1">
    <property type="nucleotide sequence ID" value="NM_001133670.1"/>
</dbReference>
<dbReference type="RefSeq" id="NP_001128855.1">
    <property type="nucleotide sequence ID" value="NM_001135383.1"/>
</dbReference>
<dbReference type="SMR" id="Q5R7B4"/>
<dbReference type="FunCoup" id="Q5R7B4">
    <property type="interactions" value="71"/>
</dbReference>
<dbReference type="STRING" id="9601.ENSPPYP00000007525"/>
<dbReference type="GlyCosmos" id="Q5R7B4">
    <property type="glycosylation" value="1 site, No reported glycans"/>
</dbReference>
<dbReference type="GeneID" id="100189778"/>
<dbReference type="KEGG" id="pon:100189778"/>
<dbReference type="CTD" id="64220"/>
<dbReference type="eggNOG" id="ENOG502QRSS">
    <property type="taxonomic scope" value="Eukaryota"/>
</dbReference>
<dbReference type="InParanoid" id="Q5R7B4"/>
<dbReference type="OrthoDB" id="9939815at2759"/>
<dbReference type="Proteomes" id="UP000001595">
    <property type="component" value="Unplaced"/>
</dbReference>
<dbReference type="GO" id="GO:0005886">
    <property type="term" value="C:plasma membrane"/>
    <property type="evidence" value="ECO:0000250"/>
    <property type="project" value="UniProtKB"/>
</dbReference>
<dbReference type="GO" id="GO:0016918">
    <property type="term" value="F:retinal binding"/>
    <property type="evidence" value="ECO:0007669"/>
    <property type="project" value="UniProtKB-KW"/>
</dbReference>
<dbReference type="GO" id="GO:0019841">
    <property type="term" value="F:retinol binding"/>
    <property type="evidence" value="ECO:0007669"/>
    <property type="project" value="UniProtKB-KW"/>
</dbReference>
<dbReference type="GO" id="GO:0034632">
    <property type="term" value="F:retinol transmembrane transporter activity"/>
    <property type="evidence" value="ECO:0000250"/>
    <property type="project" value="UniProtKB"/>
</dbReference>
<dbReference type="GO" id="GO:0038023">
    <property type="term" value="F:signaling receptor activity"/>
    <property type="evidence" value="ECO:0007669"/>
    <property type="project" value="InterPro"/>
</dbReference>
<dbReference type="GO" id="GO:0043010">
    <property type="term" value="P:camera-type eye development"/>
    <property type="evidence" value="ECO:0000250"/>
    <property type="project" value="UniProtKB"/>
</dbReference>
<dbReference type="GO" id="GO:0034633">
    <property type="term" value="P:retinol transport"/>
    <property type="evidence" value="ECO:0000250"/>
    <property type="project" value="UniProtKB"/>
</dbReference>
<dbReference type="GO" id="GO:0071939">
    <property type="term" value="P:vitamin A import into cell"/>
    <property type="evidence" value="ECO:0007669"/>
    <property type="project" value="TreeGrafter"/>
</dbReference>
<dbReference type="InterPro" id="IPR026612">
    <property type="entry name" value="STRA6-like"/>
</dbReference>
<dbReference type="PANTHER" id="PTHR21444">
    <property type="entry name" value="COILED-COIL DOMAIN-CONTAINING PROTEIN 180"/>
    <property type="match status" value="1"/>
</dbReference>
<dbReference type="PANTHER" id="PTHR21444:SF16">
    <property type="entry name" value="RECEPTOR FOR RETINOL UPTAKE STRA6"/>
    <property type="match status" value="1"/>
</dbReference>
<dbReference type="Pfam" id="PF14752">
    <property type="entry name" value="RBP_receptor"/>
    <property type="match status" value="1"/>
</dbReference>
<evidence type="ECO:0000250" key="1">
    <source>
        <dbReference type="UniProtKB" id="F1RAX4"/>
    </source>
</evidence>
<evidence type="ECO:0000250" key="2">
    <source>
        <dbReference type="UniProtKB" id="Q0V8E7"/>
    </source>
</evidence>
<evidence type="ECO:0000250" key="3">
    <source>
        <dbReference type="UniProtKB" id="Q9BX79"/>
    </source>
</evidence>
<evidence type="ECO:0000255" key="4"/>
<evidence type="ECO:0000256" key="5">
    <source>
        <dbReference type="SAM" id="MobiDB-lite"/>
    </source>
</evidence>
<evidence type="ECO:0000303" key="6">
    <source ref="1"/>
</evidence>
<evidence type="ECO:0000305" key="7"/>
<protein>
    <recommendedName>
        <fullName>Receptor for retinol uptake STRA6</fullName>
    </recommendedName>
    <alternativeName>
        <fullName>Retinol-binding protein receptor STRA6</fullName>
    </alternativeName>
    <alternativeName>
        <fullName>Stimulated by retinoic acid gene 6 protein homolog</fullName>
    </alternativeName>
</protein>
<proteinExistence type="evidence at transcript level"/>